<proteinExistence type="inferred from homology"/>
<sequence length="214" mass="24691">MLGSYFANLPHLYVHAAGLRALSTSAQLRTKAPSARKLIKMVTESSLSKKELESGTPIETQVGKGHEEVPEWKKQKLALHKKLNGEHWNPKKKLSRDQQDAVRMLKQRYPDMTNSNLADYFKVSAESIRRILKAKWQPNEDEMLEMQERWKRRGTRIKEELRESGAIPERRIRIASDGNAFRVRSVETPGEKSSKGISTPLQKNLHRLLRNTRK</sequence>
<name>RRG9_EREGS</name>
<organism>
    <name type="scientific">Eremothecium gossypii (strain ATCC 10895 / CBS 109.51 / FGSC 9923 / NRRL Y-1056)</name>
    <name type="common">Yeast</name>
    <name type="synonym">Ashbya gossypii</name>
    <dbReference type="NCBI Taxonomy" id="284811"/>
    <lineage>
        <taxon>Eukaryota</taxon>
        <taxon>Fungi</taxon>
        <taxon>Dikarya</taxon>
        <taxon>Ascomycota</taxon>
        <taxon>Saccharomycotina</taxon>
        <taxon>Saccharomycetes</taxon>
        <taxon>Saccharomycetales</taxon>
        <taxon>Saccharomycetaceae</taxon>
        <taxon>Eremothecium</taxon>
    </lineage>
</organism>
<feature type="transit peptide" description="Mitochondrion" evidence="2">
    <location>
        <begin position="1"/>
        <end position="30"/>
    </location>
</feature>
<feature type="chain" id="PRO_0000407935" description="Required for respiratory growth protein 9, mitochondrial">
    <location>
        <begin position="31"/>
        <end position="214"/>
    </location>
</feature>
<feature type="region of interest" description="Disordered" evidence="3">
    <location>
        <begin position="184"/>
        <end position="214"/>
    </location>
</feature>
<feature type="compositionally biased region" description="Basic residues" evidence="3">
    <location>
        <begin position="204"/>
        <end position="214"/>
    </location>
</feature>
<comment type="function">
    <text evidence="1">Required for respiratory activity and maintenance and expression of the mitochondrial genome.</text>
</comment>
<comment type="subcellular location">
    <subcellularLocation>
        <location evidence="1">Mitochondrion</location>
    </subcellularLocation>
</comment>
<comment type="similarity">
    <text evidence="4">Belongs to the RRG9 family.</text>
</comment>
<dbReference type="EMBL" id="AE016815">
    <property type="protein sequence ID" value="AAS50596.1"/>
    <property type="molecule type" value="Genomic_DNA"/>
</dbReference>
<dbReference type="RefSeq" id="NP_982772.1">
    <property type="nucleotide sequence ID" value="NM_208125.1"/>
</dbReference>
<dbReference type="SMR" id="Q75E45"/>
<dbReference type="FunCoup" id="Q75E45">
    <property type="interactions" value="39"/>
</dbReference>
<dbReference type="STRING" id="284811.Q75E45"/>
<dbReference type="EnsemblFungi" id="AAS50596">
    <property type="protein sequence ID" value="AAS50596"/>
    <property type="gene ID" value="AGOS_ABL175C"/>
</dbReference>
<dbReference type="GeneID" id="4618852"/>
<dbReference type="KEGG" id="ago:AGOS_ABL175C"/>
<dbReference type="eggNOG" id="ENOG502S7IA">
    <property type="taxonomic scope" value="Eukaryota"/>
</dbReference>
<dbReference type="HOGENOM" id="CLU_100293_0_0_1"/>
<dbReference type="InParanoid" id="Q75E45"/>
<dbReference type="OMA" id="LEMQERW"/>
<dbReference type="OrthoDB" id="5578174at2759"/>
<dbReference type="Proteomes" id="UP000000591">
    <property type="component" value="Chromosome II"/>
</dbReference>
<dbReference type="GO" id="GO:0005739">
    <property type="term" value="C:mitochondrion"/>
    <property type="evidence" value="ECO:0007669"/>
    <property type="project" value="UniProtKB-SubCell"/>
</dbReference>
<dbReference type="GO" id="GO:0005634">
    <property type="term" value="C:nucleus"/>
    <property type="evidence" value="ECO:0000318"/>
    <property type="project" value="GO_Central"/>
</dbReference>
<dbReference type="InterPro" id="IPR010487">
    <property type="entry name" value="NGRN/Rrg9"/>
</dbReference>
<dbReference type="PANTHER" id="PTHR13475">
    <property type="entry name" value="NEUGRIN"/>
    <property type="match status" value="1"/>
</dbReference>
<dbReference type="PANTHER" id="PTHR13475:SF3">
    <property type="entry name" value="NEUGRIN"/>
    <property type="match status" value="1"/>
</dbReference>
<dbReference type="Pfam" id="PF06413">
    <property type="entry name" value="Neugrin"/>
    <property type="match status" value="1"/>
</dbReference>
<evidence type="ECO:0000250" key="1"/>
<evidence type="ECO:0000255" key="2"/>
<evidence type="ECO:0000256" key="3">
    <source>
        <dbReference type="SAM" id="MobiDB-lite"/>
    </source>
</evidence>
<evidence type="ECO:0000305" key="4"/>
<protein>
    <recommendedName>
        <fullName>Required for respiratory growth protein 9, mitochondrial</fullName>
    </recommendedName>
</protein>
<keyword id="KW-0496">Mitochondrion</keyword>
<keyword id="KW-1185">Reference proteome</keyword>
<keyword id="KW-0809">Transit peptide</keyword>
<gene>
    <name type="primary">RRG9</name>
    <name type="ordered locus">ABL175C</name>
</gene>
<accession>Q75E45</accession>
<reference key="1">
    <citation type="journal article" date="2004" name="Science">
        <title>The Ashbya gossypii genome as a tool for mapping the ancient Saccharomyces cerevisiae genome.</title>
        <authorList>
            <person name="Dietrich F.S."/>
            <person name="Voegeli S."/>
            <person name="Brachat S."/>
            <person name="Lerch A."/>
            <person name="Gates K."/>
            <person name="Steiner S."/>
            <person name="Mohr C."/>
            <person name="Poehlmann R."/>
            <person name="Luedi P."/>
            <person name="Choi S."/>
            <person name="Wing R.A."/>
            <person name="Flavier A."/>
            <person name="Gaffney T.D."/>
            <person name="Philippsen P."/>
        </authorList>
    </citation>
    <scope>NUCLEOTIDE SEQUENCE [LARGE SCALE GENOMIC DNA]</scope>
    <source>
        <strain>ATCC 10895 / CBS 109.51 / FGSC 9923 / NRRL Y-1056</strain>
    </source>
</reference>
<reference key="2">
    <citation type="journal article" date="2013" name="G3 (Bethesda)">
        <title>Genomes of Ashbya fungi isolated from insects reveal four mating-type loci, numerous translocations, lack of transposons, and distinct gene duplications.</title>
        <authorList>
            <person name="Dietrich F.S."/>
            <person name="Voegeli S."/>
            <person name="Kuo S."/>
            <person name="Philippsen P."/>
        </authorList>
    </citation>
    <scope>GENOME REANNOTATION</scope>
    <source>
        <strain>ATCC 10895 / CBS 109.51 / FGSC 9923 / NRRL Y-1056</strain>
    </source>
</reference>